<accession>Q82N59</accession>
<proteinExistence type="inferred from homology"/>
<feature type="chain" id="PRO_0000366527" description="Ribosomal RNA large subunit methyltransferase G">
    <location>
        <begin position="1"/>
        <end position="380"/>
    </location>
</feature>
<protein>
    <recommendedName>
        <fullName evidence="1">Ribosomal RNA large subunit methyltransferase G</fullName>
        <ecNumber evidence="1">2.1.1.174</ecNumber>
    </recommendedName>
    <alternativeName>
        <fullName evidence="1">23S rRNA m2G1835 methyltransferase</fullName>
    </alternativeName>
    <alternativeName>
        <fullName evidence="1">rRNA (guanine-N(2)-)-methyltransferase RlmG</fullName>
    </alternativeName>
</protein>
<sequence>MNDPMTTPWGAYALARFPEDPRDRLRAWDASDAYLLRHLAASGTPLSGSVVVLGDRWGALTTALAAHRPTQITDSFLAREATRENLGRAGVDPSSVRLLTTRDTPPERIDVLLVRVPKSLALLEDQLHRLAPGVHEGTVVVGAGMVKEIHTSTLKLFERILGPTRTSLAEQKARLIFCTPDPGLVRDPNPWPYRYRLPDGVGPLSGRPVTNHAGVFCADRLDIGTRFFLRHLPRVSGAERVVDLGCGNGVVGTAVALTEPEAEVLFVDESYQAVASARETFRANADGTAEFLVGDGLSGVPAASVDVVLNNPPFHSHQATTDATAWRMFTGAKRALRPGGELWVIGNRHLGYHLKLRRLFGNSELVASDAKFVVLRAVKK</sequence>
<keyword id="KW-0963">Cytoplasm</keyword>
<keyword id="KW-0489">Methyltransferase</keyword>
<keyword id="KW-1185">Reference proteome</keyword>
<keyword id="KW-0698">rRNA processing</keyword>
<keyword id="KW-0949">S-adenosyl-L-methionine</keyword>
<keyword id="KW-0808">Transferase</keyword>
<name>RLMG_STRAW</name>
<organism>
    <name type="scientific">Streptomyces avermitilis (strain ATCC 31267 / DSM 46492 / JCM 5070 / NBRC 14893 / NCIMB 12804 / NRRL 8165 / MA-4680)</name>
    <dbReference type="NCBI Taxonomy" id="227882"/>
    <lineage>
        <taxon>Bacteria</taxon>
        <taxon>Bacillati</taxon>
        <taxon>Actinomycetota</taxon>
        <taxon>Actinomycetes</taxon>
        <taxon>Kitasatosporales</taxon>
        <taxon>Streptomycetaceae</taxon>
        <taxon>Streptomyces</taxon>
    </lineage>
</organism>
<dbReference type="EC" id="2.1.1.174" evidence="1"/>
<dbReference type="EMBL" id="BA000030">
    <property type="protein sequence ID" value="BAC69154.1"/>
    <property type="molecule type" value="Genomic_DNA"/>
</dbReference>
<dbReference type="SMR" id="Q82N59"/>
<dbReference type="KEGG" id="sma:SAVERM_1444"/>
<dbReference type="eggNOG" id="COG2813">
    <property type="taxonomic scope" value="Bacteria"/>
</dbReference>
<dbReference type="HOGENOM" id="CLU_040288_4_0_11"/>
<dbReference type="Proteomes" id="UP000000428">
    <property type="component" value="Chromosome"/>
</dbReference>
<dbReference type="GO" id="GO:0005737">
    <property type="term" value="C:cytoplasm"/>
    <property type="evidence" value="ECO:0007669"/>
    <property type="project" value="UniProtKB-SubCell"/>
</dbReference>
<dbReference type="GO" id="GO:0052916">
    <property type="term" value="F:23S rRNA (guanine(1835)-N(2))-methyltransferase activity"/>
    <property type="evidence" value="ECO:0007669"/>
    <property type="project" value="UniProtKB-EC"/>
</dbReference>
<dbReference type="GO" id="GO:0003676">
    <property type="term" value="F:nucleic acid binding"/>
    <property type="evidence" value="ECO:0007669"/>
    <property type="project" value="InterPro"/>
</dbReference>
<dbReference type="CDD" id="cd02440">
    <property type="entry name" value="AdoMet_MTases"/>
    <property type="match status" value="1"/>
</dbReference>
<dbReference type="Gene3D" id="3.40.50.150">
    <property type="entry name" value="Vaccinia Virus protein VP39"/>
    <property type="match status" value="2"/>
</dbReference>
<dbReference type="HAMAP" id="MF_01859">
    <property type="entry name" value="23SrRNA_methyltr_G"/>
    <property type="match status" value="1"/>
</dbReference>
<dbReference type="InterPro" id="IPR002052">
    <property type="entry name" value="DNA_methylase_N6_adenine_CS"/>
</dbReference>
<dbReference type="InterPro" id="IPR017237">
    <property type="entry name" value="rRNA_m2G-MeTrfase_RlmG"/>
</dbReference>
<dbReference type="InterPro" id="IPR046977">
    <property type="entry name" value="RsmC/RlmG"/>
</dbReference>
<dbReference type="InterPro" id="IPR029063">
    <property type="entry name" value="SAM-dependent_MTases_sf"/>
</dbReference>
<dbReference type="InterPro" id="IPR007848">
    <property type="entry name" value="Small_mtfrase_dom"/>
</dbReference>
<dbReference type="PANTHER" id="PTHR47816:SF5">
    <property type="entry name" value="RIBOSOMAL RNA LARGE SUBUNIT METHYLTRANSFERASE G"/>
    <property type="match status" value="1"/>
</dbReference>
<dbReference type="PANTHER" id="PTHR47816">
    <property type="entry name" value="RIBOSOMAL RNA SMALL SUBUNIT METHYLTRANSFERASE C"/>
    <property type="match status" value="1"/>
</dbReference>
<dbReference type="Pfam" id="PF05175">
    <property type="entry name" value="MTS"/>
    <property type="match status" value="1"/>
</dbReference>
<dbReference type="PIRSF" id="PIRSF037565">
    <property type="entry name" value="RRNA_m2G_Mtase_RsmD_prd"/>
    <property type="match status" value="1"/>
</dbReference>
<dbReference type="SUPFAM" id="SSF53335">
    <property type="entry name" value="S-adenosyl-L-methionine-dependent methyltransferases"/>
    <property type="match status" value="1"/>
</dbReference>
<comment type="function">
    <text evidence="1">Specifically methylates the guanine in position 1835 (m2G1835) of 23S rRNA.</text>
</comment>
<comment type="catalytic activity">
    <reaction evidence="1">
        <text>guanosine(1835) in 23S rRNA + S-adenosyl-L-methionine = N(2)-methylguanosine(1835) in 23S rRNA + S-adenosyl-L-homocysteine + H(+)</text>
        <dbReference type="Rhea" id="RHEA:42744"/>
        <dbReference type="Rhea" id="RHEA-COMP:10217"/>
        <dbReference type="Rhea" id="RHEA-COMP:10218"/>
        <dbReference type="ChEBI" id="CHEBI:15378"/>
        <dbReference type="ChEBI" id="CHEBI:57856"/>
        <dbReference type="ChEBI" id="CHEBI:59789"/>
        <dbReference type="ChEBI" id="CHEBI:74269"/>
        <dbReference type="ChEBI" id="CHEBI:74481"/>
        <dbReference type="EC" id="2.1.1.174"/>
    </reaction>
</comment>
<comment type="subcellular location">
    <subcellularLocation>
        <location evidence="1">Cytoplasm</location>
    </subcellularLocation>
</comment>
<comment type="similarity">
    <text evidence="1">Belongs to the methyltransferase superfamily. RlmG family.</text>
</comment>
<evidence type="ECO:0000255" key="1">
    <source>
        <dbReference type="HAMAP-Rule" id="MF_01859"/>
    </source>
</evidence>
<gene>
    <name evidence="1" type="primary">rlmG</name>
    <name type="ordered locus">SAV_1444</name>
</gene>
<reference key="1">
    <citation type="journal article" date="2001" name="Proc. Natl. Acad. Sci. U.S.A.">
        <title>Genome sequence of an industrial microorganism Streptomyces avermitilis: deducing the ability of producing secondary metabolites.</title>
        <authorList>
            <person name="Omura S."/>
            <person name="Ikeda H."/>
            <person name="Ishikawa J."/>
            <person name="Hanamoto A."/>
            <person name="Takahashi C."/>
            <person name="Shinose M."/>
            <person name="Takahashi Y."/>
            <person name="Horikawa H."/>
            <person name="Nakazawa H."/>
            <person name="Osonoe T."/>
            <person name="Kikuchi H."/>
            <person name="Shiba T."/>
            <person name="Sakaki Y."/>
            <person name="Hattori M."/>
        </authorList>
    </citation>
    <scope>NUCLEOTIDE SEQUENCE [LARGE SCALE GENOMIC DNA]</scope>
    <source>
        <strain>ATCC 31267 / DSM 46492 / JCM 5070 / NBRC 14893 / NCIMB 12804 / NRRL 8165 / MA-4680</strain>
    </source>
</reference>
<reference key="2">
    <citation type="journal article" date="2003" name="Nat. Biotechnol.">
        <title>Complete genome sequence and comparative analysis of the industrial microorganism Streptomyces avermitilis.</title>
        <authorList>
            <person name="Ikeda H."/>
            <person name="Ishikawa J."/>
            <person name="Hanamoto A."/>
            <person name="Shinose M."/>
            <person name="Kikuchi H."/>
            <person name="Shiba T."/>
            <person name="Sakaki Y."/>
            <person name="Hattori M."/>
            <person name="Omura S."/>
        </authorList>
    </citation>
    <scope>NUCLEOTIDE SEQUENCE [LARGE SCALE GENOMIC DNA]</scope>
    <source>
        <strain>ATCC 31267 / DSM 46492 / JCM 5070 / NBRC 14893 / NCIMB 12804 / NRRL 8165 / MA-4680</strain>
    </source>
</reference>